<comment type="similarity">
    <text evidence="2">Belongs to the bacterial ribosomal protein bS21 family.</text>
</comment>
<dbReference type="EMBL" id="CP000305">
    <property type="protein sequence ID" value="ABG16837.1"/>
    <property type="molecule type" value="Genomic_DNA"/>
</dbReference>
<dbReference type="EMBL" id="ACNQ01000006">
    <property type="protein sequence ID" value="EEO78294.1"/>
    <property type="molecule type" value="Genomic_DNA"/>
</dbReference>
<dbReference type="RefSeq" id="WP_001144069.1">
    <property type="nucleotide sequence ID" value="NZ_ACNQ01000006.1"/>
</dbReference>
<dbReference type="SMR" id="Q1CME3"/>
<dbReference type="GeneID" id="98390195"/>
<dbReference type="KEGG" id="ypn:YPN_0505"/>
<dbReference type="HOGENOM" id="CLU_159258_1_0_6"/>
<dbReference type="Proteomes" id="UP000008936">
    <property type="component" value="Chromosome"/>
</dbReference>
<dbReference type="GO" id="GO:1990904">
    <property type="term" value="C:ribonucleoprotein complex"/>
    <property type="evidence" value="ECO:0007669"/>
    <property type="project" value="UniProtKB-KW"/>
</dbReference>
<dbReference type="GO" id="GO:0005840">
    <property type="term" value="C:ribosome"/>
    <property type="evidence" value="ECO:0007669"/>
    <property type="project" value="UniProtKB-KW"/>
</dbReference>
<dbReference type="GO" id="GO:0003735">
    <property type="term" value="F:structural constituent of ribosome"/>
    <property type="evidence" value="ECO:0007669"/>
    <property type="project" value="InterPro"/>
</dbReference>
<dbReference type="GO" id="GO:0006412">
    <property type="term" value="P:translation"/>
    <property type="evidence" value="ECO:0007669"/>
    <property type="project" value="UniProtKB-UniRule"/>
</dbReference>
<dbReference type="FunFam" id="1.20.5.1150:FF:000001">
    <property type="entry name" value="30S ribosomal protein S21"/>
    <property type="match status" value="1"/>
</dbReference>
<dbReference type="Gene3D" id="1.20.5.1150">
    <property type="entry name" value="Ribosomal protein S8"/>
    <property type="match status" value="1"/>
</dbReference>
<dbReference type="HAMAP" id="MF_00358">
    <property type="entry name" value="Ribosomal_bS21"/>
    <property type="match status" value="1"/>
</dbReference>
<dbReference type="InterPro" id="IPR001911">
    <property type="entry name" value="Ribosomal_bS21"/>
</dbReference>
<dbReference type="InterPro" id="IPR018278">
    <property type="entry name" value="Ribosomal_bS21_CS"/>
</dbReference>
<dbReference type="InterPro" id="IPR038380">
    <property type="entry name" value="Ribosomal_bS21_sf"/>
</dbReference>
<dbReference type="NCBIfam" id="TIGR00030">
    <property type="entry name" value="S21p"/>
    <property type="match status" value="1"/>
</dbReference>
<dbReference type="PANTHER" id="PTHR21109">
    <property type="entry name" value="MITOCHONDRIAL 28S RIBOSOMAL PROTEIN S21"/>
    <property type="match status" value="1"/>
</dbReference>
<dbReference type="PANTHER" id="PTHR21109:SF22">
    <property type="entry name" value="SMALL RIBOSOMAL SUBUNIT PROTEIN BS21"/>
    <property type="match status" value="1"/>
</dbReference>
<dbReference type="Pfam" id="PF01165">
    <property type="entry name" value="Ribosomal_S21"/>
    <property type="match status" value="1"/>
</dbReference>
<dbReference type="PRINTS" id="PR00976">
    <property type="entry name" value="RIBOSOMALS21"/>
</dbReference>
<dbReference type="PROSITE" id="PS01181">
    <property type="entry name" value="RIBOSOMAL_S21"/>
    <property type="match status" value="1"/>
</dbReference>
<organism>
    <name type="scientific">Yersinia pestis bv. Antiqua (strain Nepal516)</name>
    <dbReference type="NCBI Taxonomy" id="377628"/>
    <lineage>
        <taxon>Bacteria</taxon>
        <taxon>Pseudomonadati</taxon>
        <taxon>Pseudomonadota</taxon>
        <taxon>Gammaproteobacteria</taxon>
        <taxon>Enterobacterales</taxon>
        <taxon>Yersiniaceae</taxon>
        <taxon>Yersinia</taxon>
    </lineage>
</organism>
<name>RS21_YERPN</name>
<reference key="1">
    <citation type="journal article" date="2006" name="J. Bacteriol.">
        <title>Complete genome sequence of Yersinia pestis strains Antiqua and Nepal516: evidence of gene reduction in an emerging pathogen.</title>
        <authorList>
            <person name="Chain P.S.G."/>
            <person name="Hu P."/>
            <person name="Malfatti S.A."/>
            <person name="Radnedge L."/>
            <person name="Larimer F."/>
            <person name="Vergez L.M."/>
            <person name="Worsham P."/>
            <person name="Chu M.C."/>
            <person name="Andersen G.L."/>
        </authorList>
    </citation>
    <scope>NUCLEOTIDE SEQUENCE [LARGE SCALE GENOMIC DNA]</scope>
    <source>
        <strain>Nepal516</strain>
    </source>
</reference>
<reference key="2">
    <citation type="submission" date="2009-04" db="EMBL/GenBank/DDBJ databases">
        <title>Yersinia pestis Nepal516A whole genome shotgun sequencing project.</title>
        <authorList>
            <person name="Plunkett G. III"/>
            <person name="Anderson B.D."/>
            <person name="Baumler D.J."/>
            <person name="Burland V."/>
            <person name="Cabot E.L."/>
            <person name="Glasner J.D."/>
            <person name="Mau B."/>
            <person name="Neeno-Eckwall E."/>
            <person name="Perna N.T."/>
            <person name="Munk A.C."/>
            <person name="Tapia R."/>
            <person name="Green L.D."/>
            <person name="Rogers Y.C."/>
            <person name="Detter J.C."/>
            <person name="Bruce D.C."/>
            <person name="Brettin T.S."/>
        </authorList>
    </citation>
    <scope>NUCLEOTIDE SEQUENCE [LARGE SCALE GENOMIC DNA]</scope>
    <source>
        <strain>Nepal516</strain>
    </source>
</reference>
<evidence type="ECO:0000250" key="1"/>
<evidence type="ECO:0000255" key="2">
    <source>
        <dbReference type="HAMAP-Rule" id="MF_00358"/>
    </source>
</evidence>
<evidence type="ECO:0000256" key="3">
    <source>
        <dbReference type="SAM" id="MobiDB-lite"/>
    </source>
</evidence>
<evidence type="ECO:0000305" key="4"/>
<proteinExistence type="inferred from homology"/>
<sequence>MPVIKVRENEPFDVALRRFKRSCEKAGVLAEVRRREFYEKPTTERKRAKASAVKRHAKKLARENARRTRLY</sequence>
<gene>
    <name evidence="2" type="primary">rpsU</name>
    <name type="ordered locus">YPN_0505</name>
    <name type="ORF">YP516_0523</name>
</gene>
<feature type="initiator methionine" description="Removed" evidence="1">
    <location>
        <position position="1"/>
    </location>
</feature>
<feature type="chain" id="PRO_0000266802" description="Small ribosomal subunit protein bS21">
    <location>
        <begin position="2"/>
        <end position="71"/>
    </location>
</feature>
<feature type="region of interest" description="Disordered" evidence="3">
    <location>
        <begin position="43"/>
        <end position="71"/>
    </location>
</feature>
<feature type="compositionally biased region" description="Basic residues" evidence="3">
    <location>
        <begin position="46"/>
        <end position="59"/>
    </location>
</feature>
<feature type="compositionally biased region" description="Basic and acidic residues" evidence="3">
    <location>
        <begin position="60"/>
        <end position="71"/>
    </location>
</feature>
<accession>Q1CME3</accession>
<accession>C4GP62</accession>
<protein>
    <recommendedName>
        <fullName evidence="2">Small ribosomal subunit protein bS21</fullName>
    </recommendedName>
    <alternativeName>
        <fullName evidence="4">30S ribosomal protein S21</fullName>
    </alternativeName>
</protein>
<keyword id="KW-0687">Ribonucleoprotein</keyword>
<keyword id="KW-0689">Ribosomal protein</keyword>